<protein>
    <recommendedName>
        <fullName evidence="1">Catalase-peroxidase</fullName>
        <shortName evidence="1">CP</shortName>
        <ecNumber evidence="1">1.11.1.21</ecNumber>
    </recommendedName>
    <alternativeName>
        <fullName evidence="1">Peroxidase/catalase</fullName>
    </alternativeName>
</protein>
<keyword id="KW-0349">Heme</keyword>
<keyword id="KW-0376">Hydrogen peroxide</keyword>
<keyword id="KW-0408">Iron</keyword>
<keyword id="KW-0479">Metal-binding</keyword>
<keyword id="KW-0560">Oxidoreductase</keyword>
<keyword id="KW-0575">Peroxidase</keyword>
<keyword id="KW-0614">Plasmid</keyword>
<proteinExistence type="inferred from homology"/>
<feature type="chain" id="PRO_0000354935" description="Catalase-peroxidase">
    <location>
        <begin position="1"/>
        <end position="729"/>
    </location>
</feature>
<feature type="region of interest" description="Disordered" evidence="2">
    <location>
        <begin position="1"/>
        <end position="26"/>
    </location>
</feature>
<feature type="active site" description="Proton acceptor" evidence="1">
    <location>
        <position position="98"/>
    </location>
</feature>
<feature type="binding site" description="axial binding residue" evidence="1">
    <location>
        <position position="260"/>
    </location>
    <ligand>
        <name>heme b</name>
        <dbReference type="ChEBI" id="CHEBI:60344"/>
    </ligand>
    <ligandPart>
        <name>Fe</name>
        <dbReference type="ChEBI" id="CHEBI:18248"/>
    </ligandPart>
</feature>
<feature type="site" description="Transition state stabilizer" evidence="1">
    <location>
        <position position="94"/>
    </location>
</feature>
<feature type="cross-link" description="Tryptophyl-tyrosyl-methioninium (Trp-Tyr) (with M-245)" evidence="1">
    <location>
        <begin position="97"/>
        <end position="219"/>
    </location>
</feature>
<feature type="cross-link" description="Tryptophyl-tyrosyl-methioninium (Tyr-Met) (with W-97)" evidence="1">
    <location>
        <begin position="219"/>
        <end position="245"/>
    </location>
</feature>
<geneLocation type="plasmid">
    <name>pSMED02</name>
</geneLocation>
<reference key="1">
    <citation type="submission" date="2007-06" db="EMBL/GenBank/DDBJ databases">
        <title>Complete sequence of Sinorhizobium medicae WSM419 plasmid pSMED02.</title>
        <authorList>
            <consortium name="US DOE Joint Genome Institute"/>
            <person name="Copeland A."/>
            <person name="Lucas S."/>
            <person name="Lapidus A."/>
            <person name="Barry K."/>
            <person name="Glavina del Rio T."/>
            <person name="Dalin E."/>
            <person name="Tice H."/>
            <person name="Pitluck S."/>
            <person name="Chain P."/>
            <person name="Malfatti S."/>
            <person name="Shin M."/>
            <person name="Vergez L."/>
            <person name="Schmutz J."/>
            <person name="Larimer F."/>
            <person name="Land M."/>
            <person name="Hauser L."/>
            <person name="Kyrpides N."/>
            <person name="Mikhailova N."/>
            <person name="Reeve W.G."/>
            <person name="Richardson P."/>
        </authorList>
    </citation>
    <scope>NUCLEOTIDE SEQUENCE [LARGE SCALE GENOMIC DNA]</scope>
    <source>
        <strain>WSM419</strain>
    </source>
</reference>
<dbReference type="EC" id="1.11.1.21" evidence="1"/>
<dbReference type="EMBL" id="CP000740">
    <property type="protein sequence ID" value="ABR64103.1"/>
    <property type="molecule type" value="Genomic_DNA"/>
</dbReference>
<dbReference type="RefSeq" id="YP_001314036.1">
    <property type="nucleotide sequence ID" value="NC_009621.1"/>
</dbReference>
<dbReference type="SMR" id="A6UKC3"/>
<dbReference type="PeroxiBase" id="5441">
    <property type="entry name" value="SmedCP01"/>
</dbReference>
<dbReference type="KEGG" id="smd:Smed_5331"/>
<dbReference type="PATRIC" id="fig|366394.8.peg.1821"/>
<dbReference type="eggNOG" id="COG0376">
    <property type="taxonomic scope" value="Bacteria"/>
</dbReference>
<dbReference type="HOGENOM" id="CLU_025424_2_0_5"/>
<dbReference type="OrthoDB" id="9759743at2"/>
<dbReference type="Proteomes" id="UP000001108">
    <property type="component" value="Plasmid pSMED02"/>
</dbReference>
<dbReference type="GO" id="GO:0005829">
    <property type="term" value="C:cytosol"/>
    <property type="evidence" value="ECO:0007669"/>
    <property type="project" value="TreeGrafter"/>
</dbReference>
<dbReference type="GO" id="GO:0004096">
    <property type="term" value="F:catalase activity"/>
    <property type="evidence" value="ECO:0007669"/>
    <property type="project" value="UniProtKB-UniRule"/>
</dbReference>
<dbReference type="GO" id="GO:0020037">
    <property type="term" value="F:heme binding"/>
    <property type="evidence" value="ECO:0007669"/>
    <property type="project" value="InterPro"/>
</dbReference>
<dbReference type="GO" id="GO:0046872">
    <property type="term" value="F:metal ion binding"/>
    <property type="evidence" value="ECO:0007669"/>
    <property type="project" value="UniProtKB-KW"/>
</dbReference>
<dbReference type="GO" id="GO:0070301">
    <property type="term" value="P:cellular response to hydrogen peroxide"/>
    <property type="evidence" value="ECO:0007669"/>
    <property type="project" value="TreeGrafter"/>
</dbReference>
<dbReference type="GO" id="GO:0042744">
    <property type="term" value="P:hydrogen peroxide catabolic process"/>
    <property type="evidence" value="ECO:0007669"/>
    <property type="project" value="UniProtKB-KW"/>
</dbReference>
<dbReference type="CDD" id="cd00649">
    <property type="entry name" value="catalase_peroxidase_1"/>
    <property type="match status" value="1"/>
</dbReference>
<dbReference type="CDD" id="cd08200">
    <property type="entry name" value="catalase_peroxidase_2"/>
    <property type="match status" value="1"/>
</dbReference>
<dbReference type="FunFam" id="1.10.420.10:FF:000002">
    <property type="entry name" value="Catalase-peroxidase"/>
    <property type="match status" value="1"/>
</dbReference>
<dbReference type="FunFam" id="1.10.420.10:FF:000004">
    <property type="entry name" value="Catalase-peroxidase"/>
    <property type="match status" value="1"/>
</dbReference>
<dbReference type="FunFam" id="1.10.520.10:FF:000002">
    <property type="entry name" value="Catalase-peroxidase"/>
    <property type="match status" value="1"/>
</dbReference>
<dbReference type="Gene3D" id="1.10.520.10">
    <property type="match status" value="2"/>
</dbReference>
<dbReference type="Gene3D" id="1.10.420.10">
    <property type="entry name" value="Peroxidase, domain 2"/>
    <property type="match status" value="2"/>
</dbReference>
<dbReference type="HAMAP" id="MF_01961">
    <property type="entry name" value="Catal_peroxid"/>
    <property type="match status" value="1"/>
</dbReference>
<dbReference type="InterPro" id="IPR000763">
    <property type="entry name" value="Catalase_peroxidase"/>
</dbReference>
<dbReference type="InterPro" id="IPR002016">
    <property type="entry name" value="Haem_peroxidase"/>
</dbReference>
<dbReference type="InterPro" id="IPR010255">
    <property type="entry name" value="Haem_peroxidase_sf"/>
</dbReference>
<dbReference type="InterPro" id="IPR019794">
    <property type="entry name" value="Peroxidases_AS"/>
</dbReference>
<dbReference type="InterPro" id="IPR019793">
    <property type="entry name" value="Peroxidases_heam-ligand_BS"/>
</dbReference>
<dbReference type="NCBIfam" id="TIGR00198">
    <property type="entry name" value="cat_per_HPI"/>
    <property type="match status" value="1"/>
</dbReference>
<dbReference type="NCBIfam" id="NF011635">
    <property type="entry name" value="PRK15061.1"/>
    <property type="match status" value="1"/>
</dbReference>
<dbReference type="PANTHER" id="PTHR30555:SF0">
    <property type="entry name" value="CATALASE-PEROXIDASE"/>
    <property type="match status" value="1"/>
</dbReference>
<dbReference type="PANTHER" id="PTHR30555">
    <property type="entry name" value="HYDROPEROXIDASE I, BIFUNCTIONAL CATALASE-PEROXIDASE"/>
    <property type="match status" value="1"/>
</dbReference>
<dbReference type="Pfam" id="PF00141">
    <property type="entry name" value="peroxidase"/>
    <property type="match status" value="2"/>
</dbReference>
<dbReference type="PRINTS" id="PR00460">
    <property type="entry name" value="BPEROXIDASE"/>
</dbReference>
<dbReference type="PRINTS" id="PR00458">
    <property type="entry name" value="PEROXIDASE"/>
</dbReference>
<dbReference type="SUPFAM" id="SSF48113">
    <property type="entry name" value="Heme-dependent peroxidases"/>
    <property type="match status" value="2"/>
</dbReference>
<dbReference type="PROSITE" id="PS00435">
    <property type="entry name" value="PEROXIDASE_1"/>
    <property type="match status" value="1"/>
</dbReference>
<dbReference type="PROSITE" id="PS00436">
    <property type="entry name" value="PEROXIDASE_2"/>
    <property type="match status" value="1"/>
</dbReference>
<dbReference type="PROSITE" id="PS50873">
    <property type="entry name" value="PEROXIDASE_4"/>
    <property type="match status" value="1"/>
</dbReference>
<evidence type="ECO:0000255" key="1">
    <source>
        <dbReference type="HAMAP-Rule" id="MF_01961"/>
    </source>
</evidence>
<evidence type="ECO:0000256" key="2">
    <source>
        <dbReference type="SAM" id="MobiDB-lite"/>
    </source>
</evidence>
<name>KATG_SINMW</name>
<gene>
    <name evidence="1" type="primary">katG</name>
    <name type="ordered locus">Smed_5331</name>
</gene>
<organism>
    <name type="scientific">Sinorhizobium medicae (strain WSM419)</name>
    <name type="common">Ensifer medicae</name>
    <dbReference type="NCBI Taxonomy" id="366394"/>
    <lineage>
        <taxon>Bacteria</taxon>
        <taxon>Pseudomonadati</taxon>
        <taxon>Pseudomonadota</taxon>
        <taxon>Alphaproteobacteria</taxon>
        <taxon>Hyphomicrobiales</taxon>
        <taxon>Rhizobiaceae</taxon>
        <taxon>Sinorhizobium/Ensifer group</taxon>
        <taxon>Sinorhizobium</taxon>
    </lineage>
</organism>
<comment type="function">
    <text evidence="1">Bifunctional enzyme with both catalase and broad-spectrum peroxidase activity.</text>
</comment>
<comment type="catalytic activity">
    <reaction evidence="1">
        <text>H2O2 + AH2 = A + 2 H2O</text>
        <dbReference type="Rhea" id="RHEA:30275"/>
        <dbReference type="ChEBI" id="CHEBI:13193"/>
        <dbReference type="ChEBI" id="CHEBI:15377"/>
        <dbReference type="ChEBI" id="CHEBI:16240"/>
        <dbReference type="ChEBI" id="CHEBI:17499"/>
        <dbReference type="EC" id="1.11.1.21"/>
    </reaction>
</comment>
<comment type="catalytic activity">
    <reaction evidence="1">
        <text>2 H2O2 = O2 + 2 H2O</text>
        <dbReference type="Rhea" id="RHEA:20309"/>
        <dbReference type="ChEBI" id="CHEBI:15377"/>
        <dbReference type="ChEBI" id="CHEBI:15379"/>
        <dbReference type="ChEBI" id="CHEBI:16240"/>
        <dbReference type="EC" id="1.11.1.21"/>
    </reaction>
</comment>
<comment type="cofactor">
    <cofactor evidence="1">
        <name>heme b</name>
        <dbReference type="ChEBI" id="CHEBI:60344"/>
    </cofactor>
    <text evidence="1">Binds 1 heme b (iron(II)-protoporphyrin IX) group per dimer.</text>
</comment>
<comment type="subunit">
    <text evidence="1">Homodimer or homotetramer.</text>
</comment>
<comment type="PTM">
    <text evidence="1">Formation of the three residue Trp-Tyr-Met cross-link is important for the catalase, but not the peroxidase activity of the enzyme.</text>
</comment>
<comment type="similarity">
    <text evidence="1">Belongs to the peroxidase family. Peroxidase/catalase subfamily.</text>
</comment>
<sequence>MTMDQKTDNAGKCPVAHTAPRGRSNRDWWPDQLDVQVLHRHSDLSDPMGKSFNYAEEFRKLDLDALKRDLHALMTDSQDWWPADFGHYGGLFIRMAWHSAGTYRITDGRGGAGQGQQRFAPLNSWPDNANLDKARRLLWPIKQKYGNRISWADLLILTGNVALESMGFKTFGFAGGRTDVWEPEELFWGPEGTWLGDERYSGERQLSEPLAAVQMGLIYVNPEGPNGNPDPVAAAHDIRETFARMAMNDEETVALIAGGHTFGKTHGAGDPSFIGADPEGGAIEDQGLGWKSTFGTGVGKDAITGGPEVTWSQTPTRWSNYFFENLFNFEWELSKSPAGAHQWKAKNAEASVPDAYDATRKHVPTMLTTDLSLRFDPVYEKISRRFLENPDQFADAFARAWFKLTHRDMGPKVRYLGPEVPAEDLIWQDVIPPVDHELVDDADVAGLKAKILASSLSVQELVSTAWDSASTFRGSDKRGGANGARIRLAPQKDWEVNQPAQLARVLSVLEGIQRDFNASQAGGKKISLADLIVLAGNAGVEKAARAAGQEIIVPFTPGRMDASEAQTDAASFAALEPRADGFRNYVNSSRLQFMKPEEALVDRAQLLTLTAPEMTVLVGGLRVLKAGQPEHGVFTSRPEALTNDFFVNLLDMGTQWSPVEGKEGVYEGRDRKTGAARWTGTRVDLIFGSHSQLRAFAEVYAQTDAREKFVKDFVAAWTKVMNADRFDLV</sequence>
<accession>A6UKC3</accession>